<protein>
    <recommendedName>
        <fullName evidence="2">Purine nucleoside phosphorylase DeoD-type</fullName>
        <shortName evidence="2">PNP</shortName>
        <ecNumber evidence="2">2.4.2.1</ecNumber>
    </recommendedName>
</protein>
<reference key="1">
    <citation type="journal article" date="1996" name="Nucleic Acids Res.">
        <title>Complete sequence analysis of the genome of the bacterium Mycoplasma pneumoniae.</title>
        <authorList>
            <person name="Himmelreich R."/>
            <person name="Hilbert H."/>
            <person name="Plagens H."/>
            <person name="Pirkl E."/>
            <person name="Li B.-C."/>
            <person name="Herrmann R."/>
        </authorList>
    </citation>
    <scope>NUCLEOTIDE SEQUENCE [LARGE SCALE GENOMIC DNA]</scope>
    <source>
        <strain>ATCC 29342 / M129 / Subtype 1</strain>
    </source>
</reference>
<gene>
    <name evidence="2" type="primary">deoD</name>
    <name type="ordered locus">MPN_062</name>
    <name type="ORF">MP092</name>
</gene>
<keyword id="KW-0328">Glycosyltransferase</keyword>
<keyword id="KW-1185">Reference proteome</keyword>
<keyword id="KW-0808">Transferase</keyword>
<name>DEOD_MYCPN</name>
<evidence type="ECO:0000250" key="1">
    <source>
        <dbReference type="UniProtKB" id="P50389"/>
    </source>
</evidence>
<evidence type="ECO:0000255" key="2">
    <source>
        <dbReference type="HAMAP-Rule" id="MF_01627"/>
    </source>
</evidence>
<evidence type="ECO:0000305" key="3"/>
<accession>P75053</accession>
<dbReference type="EC" id="2.4.2.1" evidence="2"/>
<dbReference type="EMBL" id="U00089">
    <property type="protein sequence ID" value="AAB95740.1"/>
    <property type="molecule type" value="Genomic_DNA"/>
</dbReference>
<dbReference type="PIR" id="S73418">
    <property type="entry name" value="S73418"/>
</dbReference>
<dbReference type="RefSeq" id="NP_109750.1">
    <property type="nucleotide sequence ID" value="NC_000912.1"/>
</dbReference>
<dbReference type="RefSeq" id="WP_010874419.1">
    <property type="nucleotide sequence ID" value="NC_000912.1"/>
</dbReference>
<dbReference type="SMR" id="P75053"/>
<dbReference type="IntAct" id="P75053">
    <property type="interactions" value="1"/>
</dbReference>
<dbReference type="STRING" id="272634.MPN_062"/>
<dbReference type="EnsemblBacteria" id="AAB95740">
    <property type="protein sequence ID" value="AAB95740"/>
    <property type="gene ID" value="MPN_062"/>
</dbReference>
<dbReference type="KEGG" id="mpn:MPN_062"/>
<dbReference type="PATRIC" id="fig|272634.6.peg.63"/>
<dbReference type="HOGENOM" id="CLU_068457_2_0_14"/>
<dbReference type="OrthoDB" id="9782889at2"/>
<dbReference type="BioCyc" id="MetaCyc:MONOMER-561"/>
<dbReference type="BioCyc" id="MPNE272634:G1GJ3-98-MONOMER"/>
<dbReference type="Proteomes" id="UP000000808">
    <property type="component" value="Chromosome"/>
</dbReference>
<dbReference type="GO" id="GO:0005829">
    <property type="term" value="C:cytosol"/>
    <property type="evidence" value="ECO:0007669"/>
    <property type="project" value="TreeGrafter"/>
</dbReference>
<dbReference type="GO" id="GO:0004731">
    <property type="term" value="F:purine-nucleoside phosphorylase activity"/>
    <property type="evidence" value="ECO:0007669"/>
    <property type="project" value="UniProtKB-EC"/>
</dbReference>
<dbReference type="GO" id="GO:0006152">
    <property type="term" value="P:purine nucleoside catabolic process"/>
    <property type="evidence" value="ECO:0007669"/>
    <property type="project" value="TreeGrafter"/>
</dbReference>
<dbReference type="CDD" id="cd09006">
    <property type="entry name" value="PNP_EcPNPI-like"/>
    <property type="match status" value="1"/>
</dbReference>
<dbReference type="Gene3D" id="3.40.50.1580">
    <property type="entry name" value="Nucleoside phosphorylase domain"/>
    <property type="match status" value="1"/>
</dbReference>
<dbReference type="HAMAP" id="MF_01627">
    <property type="entry name" value="Pur_nucleosid_phosp"/>
    <property type="match status" value="1"/>
</dbReference>
<dbReference type="InterPro" id="IPR004402">
    <property type="entry name" value="DeoD-type"/>
</dbReference>
<dbReference type="InterPro" id="IPR018016">
    <property type="entry name" value="Nucleoside_phosphorylase_CS"/>
</dbReference>
<dbReference type="InterPro" id="IPR000845">
    <property type="entry name" value="Nucleoside_phosphorylase_d"/>
</dbReference>
<dbReference type="InterPro" id="IPR035994">
    <property type="entry name" value="Nucleoside_phosphorylase_sf"/>
</dbReference>
<dbReference type="NCBIfam" id="TIGR00107">
    <property type="entry name" value="deoD"/>
    <property type="match status" value="1"/>
</dbReference>
<dbReference type="NCBIfam" id="NF004489">
    <property type="entry name" value="PRK05819.1"/>
    <property type="match status" value="1"/>
</dbReference>
<dbReference type="PANTHER" id="PTHR43691:SF11">
    <property type="entry name" value="FI09636P-RELATED"/>
    <property type="match status" value="1"/>
</dbReference>
<dbReference type="PANTHER" id="PTHR43691">
    <property type="entry name" value="URIDINE PHOSPHORYLASE"/>
    <property type="match status" value="1"/>
</dbReference>
<dbReference type="Pfam" id="PF01048">
    <property type="entry name" value="PNP_UDP_1"/>
    <property type="match status" value="1"/>
</dbReference>
<dbReference type="SUPFAM" id="SSF53167">
    <property type="entry name" value="Purine and uridine phosphorylases"/>
    <property type="match status" value="1"/>
</dbReference>
<dbReference type="PROSITE" id="PS01232">
    <property type="entry name" value="PNP_UDP_1"/>
    <property type="match status" value="1"/>
</dbReference>
<comment type="function">
    <text evidence="2">Catalyzes the reversible phosphorolytic breakdown of the N-glycosidic bond in the beta-(deoxy)ribonucleoside molecules, with the formation of the corresponding free purine bases and pentose-1-phosphate.</text>
</comment>
<comment type="catalytic activity">
    <reaction evidence="2">
        <text>a purine D-ribonucleoside + phosphate = a purine nucleobase + alpha-D-ribose 1-phosphate</text>
        <dbReference type="Rhea" id="RHEA:19805"/>
        <dbReference type="ChEBI" id="CHEBI:26386"/>
        <dbReference type="ChEBI" id="CHEBI:43474"/>
        <dbReference type="ChEBI" id="CHEBI:57720"/>
        <dbReference type="ChEBI" id="CHEBI:142355"/>
        <dbReference type="EC" id="2.4.2.1"/>
    </reaction>
</comment>
<comment type="catalytic activity">
    <reaction evidence="2">
        <text>a purine 2'-deoxy-D-ribonucleoside + phosphate = a purine nucleobase + 2-deoxy-alpha-D-ribose 1-phosphate</text>
        <dbReference type="Rhea" id="RHEA:36431"/>
        <dbReference type="ChEBI" id="CHEBI:26386"/>
        <dbReference type="ChEBI" id="CHEBI:43474"/>
        <dbReference type="ChEBI" id="CHEBI:57259"/>
        <dbReference type="ChEBI" id="CHEBI:142361"/>
        <dbReference type="EC" id="2.4.2.1"/>
    </reaction>
</comment>
<comment type="subunit">
    <text evidence="2">Homohexamer; trimer of homodimers.</text>
</comment>
<comment type="similarity">
    <text evidence="2 3">Belongs to the PNP/UDP phosphorylase family.</text>
</comment>
<feature type="chain" id="PRO_0000063148" description="Purine nucleoside phosphorylase DeoD-type">
    <location>
        <begin position="1"/>
        <end position="238"/>
    </location>
</feature>
<feature type="active site" description="Proton donor" evidence="2">
    <location>
        <position position="206"/>
    </location>
</feature>
<feature type="binding site" evidence="1">
    <location>
        <position position="4"/>
    </location>
    <ligand>
        <name>a purine D-ribonucleoside</name>
        <dbReference type="ChEBI" id="CHEBI:142355"/>
        <note>ligand shared between dimeric partners</note>
    </ligand>
</feature>
<feature type="binding site" description="in other chain" evidence="1">
    <location>
        <position position="20"/>
    </location>
    <ligand>
        <name>phosphate</name>
        <dbReference type="ChEBI" id="CHEBI:43474"/>
        <note>ligand shared between dimeric partners</note>
    </ligand>
</feature>
<feature type="binding site" description="in other chain" evidence="1">
    <location>
        <position position="24"/>
    </location>
    <ligand>
        <name>phosphate</name>
        <dbReference type="ChEBI" id="CHEBI:43474"/>
        <note>ligand shared between dimeric partners</note>
    </ligand>
</feature>
<feature type="binding site" evidence="1">
    <location>
        <position position="43"/>
    </location>
    <ligand>
        <name>phosphate</name>
        <dbReference type="ChEBI" id="CHEBI:43474"/>
        <note>ligand shared between dimeric partners</note>
    </ligand>
</feature>
<feature type="binding site" description="in other chain" evidence="1">
    <location>
        <begin position="87"/>
        <end position="90"/>
    </location>
    <ligand>
        <name>phosphate</name>
        <dbReference type="ChEBI" id="CHEBI:43474"/>
        <note>ligand shared between dimeric partners</note>
    </ligand>
</feature>
<feature type="binding site" description="in other chain" evidence="1">
    <location>
        <begin position="181"/>
        <end position="183"/>
    </location>
    <ligand>
        <name>a purine D-ribonucleoside</name>
        <dbReference type="ChEBI" id="CHEBI:142355"/>
        <note>ligand shared between dimeric partners</note>
    </ligand>
</feature>
<feature type="binding site" description="in other chain" evidence="1">
    <location>
        <begin position="205"/>
        <end position="206"/>
    </location>
    <ligand>
        <name>a purine D-ribonucleoside</name>
        <dbReference type="ChEBI" id="CHEBI:142355"/>
        <note>ligand shared between dimeric partners</note>
    </ligand>
</feature>
<feature type="site" description="Important for catalytic activity" evidence="2">
    <location>
        <position position="219"/>
    </location>
</feature>
<organism>
    <name type="scientific">Mycoplasma pneumoniae (strain ATCC 29342 / M129 / Subtype 1)</name>
    <name type="common">Mycoplasmoides pneumoniae</name>
    <dbReference type="NCBI Taxonomy" id="272634"/>
    <lineage>
        <taxon>Bacteria</taxon>
        <taxon>Bacillati</taxon>
        <taxon>Mycoplasmatota</taxon>
        <taxon>Mycoplasmoidales</taxon>
        <taxon>Mycoplasmoidaceae</taxon>
        <taxon>Mycoplasmoides</taxon>
    </lineage>
</organism>
<proteinExistence type="inferred from homology"/>
<sequence>MTPHINAKKDDIAKVVLMPGDPLRAKWIAEQFMEKPRLVNEVRGMLAFTGQYKGKTITIMGHGMGIPSIGIYSYELMKFYEVNTIIRIGSCGALQGSLNLQDLIIAAKAWSESIYANDMGVEVPADKILMASPQLVELAKKTANQLQLAFHEGLVFCEDAFHQIRKDVLKLAQEKHALAVEMEAHALYANAMLLNKQALTMLTVSDSLVTHAALPAEQRQATFKNMAILSLEMASQLV</sequence>